<proteinExistence type="inferred from homology"/>
<keyword id="KW-0001">2Fe-2S</keyword>
<keyword id="KW-0004">4Fe-4S</keyword>
<keyword id="KW-0093">Biotin biosynthesis</keyword>
<keyword id="KW-0408">Iron</keyword>
<keyword id="KW-0411">Iron-sulfur</keyword>
<keyword id="KW-0479">Metal-binding</keyword>
<keyword id="KW-1185">Reference proteome</keyword>
<keyword id="KW-0949">S-adenosyl-L-methionine</keyword>
<keyword id="KW-0808">Transferase</keyword>
<organism>
    <name type="scientific">Heliobacterium modesticaldum (strain ATCC 51547 / Ice1)</name>
    <dbReference type="NCBI Taxonomy" id="498761"/>
    <lineage>
        <taxon>Bacteria</taxon>
        <taxon>Bacillati</taxon>
        <taxon>Bacillota</taxon>
        <taxon>Clostridia</taxon>
        <taxon>Eubacteriales</taxon>
        <taxon>Heliobacteriaceae</taxon>
        <taxon>Heliomicrobium</taxon>
    </lineage>
</organism>
<reference key="1">
    <citation type="journal article" date="2008" name="J. Bacteriol.">
        <title>The genome of Heliobacterium modesticaldum, a phototrophic representative of the Firmicutes containing the simplest photosynthetic apparatus.</title>
        <authorList>
            <person name="Sattley W.M."/>
            <person name="Madigan M.T."/>
            <person name="Swingley W.D."/>
            <person name="Cheung P.C."/>
            <person name="Clocksin K.M."/>
            <person name="Conrad A.L."/>
            <person name="Dejesa L.C."/>
            <person name="Honchak B.M."/>
            <person name="Jung D.O."/>
            <person name="Karbach L.E."/>
            <person name="Kurdoglu A."/>
            <person name="Lahiri S."/>
            <person name="Mastrian S.D."/>
            <person name="Page L.E."/>
            <person name="Taylor H.L."/>
            <person name="Wang Z.T."/>
            <person name="Raymond J."/>
            <person name="Chen M."/>
            <person name="Blankenship R.E."/>
            <person name="Touchman J.W."/>
        </authorList>
    </citation>
    <scope>NUCLEOTIDE SEQUENCE [LARGE SCALE GENOMIC DNA]</scope>
    <source>
        <strain>ATCC 51547 / Ice1</strain>
    </source>
</reference>
<evidence type="ECO:0000255" key="1">
    <source>
        <dbReference type="HAMAP-Rule" id="MF_01694"/>
    </source>
</evidence>
<evidence type="ECO:0000255" key="2">
    <source>
        <dbReference type="PROSITE-ProRule" id="PRU01266"/>
    </source>
</evidence>
<comment type="function">
    <text evidence="1">Catalyzes the conversion of dethiobiotin (DTB) to biotin by the insertion of a sulfur atom into dethiobiotin via a radical-based mechanism.</text>
</comment>
<comment type="catalytic activity">
    <reaction evidence="1">
        <text>(4R,5S)-dethiobiotin + (sulfur carrier)-SH + 2 reduced [2Fe-2S]-[ferredoxin] + 2 S-adenosyl-L-methionine = (sulfur carrier)-H + biotin + 2 5'-deoxyadenosine + 2 L-methionine + 2 oxidized [2Fe-2S]-[ferredoxin]</text>
        <dbReference type="Rhea" id="RHEA:22060"/>
        <dbReference type="Rhea" id="RHEA-COMP:10000"/>
        <dbReference type="Rhea" id="RHEA-COMP:10001"/>
        <dbReference type="Rhea" id="RHEA-COMP:14737"/>
        <dbReference type="Rhea" id="RHEA-COMP:14739"/>
        <dbReference type="ChEBI" id="CHEBI:17319"/>
        <dbReference type="ChEBI" id="CHEBI:29917"/>
        <dbReference type="ChEBI" id="CHEBI:33737"/>
        <dbReference type="ChEBI" id="CHEBI:33738"/>
        <dbReference type="ChEBI" id="CHEBI:57586"/>
        <dbReference type="ChEBI" id="CHEBI:57844"/>
        <dbReference type="ChEBI" id="CHEBI:59789"/>
        <dbReference type="ChEBI" id="CHEBI:64428"/>
        <dbReference type="ChEBI" id="CHEBI:149473"/>
        <dbReference type="EC" id="2.8.1.6"/>
    </reaction>
</comment>
<comment type="cofactor">
    <cofactor evidence="1">
        <name>[4Fe-4S] cluster</name>
        <dbReference type="ChEBI" id="CHEBI:49883"/>
    </cofactor>
    <text evidence="1">Binds 1 [4Fe-4S] cluster. The cluster is coordinated with 3 cysteines and an exchangeable S-adenosyl-L-methionine.</text>
</comment>
<comment type="cofactor">
    <cofactor evidence="1">
        <name>[2Fe-2S] cluster</name>
        <dbReference type="ChEBI" id="CHEBI:190135"/>
    </cofactor>
    <text evidence="1">Binds 1 [2Fe-2S] cluster. The cluster is coordinated with 3 cysteines and 1 arginine.</text>
</comment>
<comment type="pathway">
    <text evidence="1">Cofactor biosynthesis; biotin biosynthesis; biotin from 7,8-diaminononanoate: step 2/2.</text>
</comment>
<comment type="subunit">
    <text evidence="1">Homodimer.</text>
</comment>
<comment type="similarity">
    <text evidence="1">Belongs to the radical SAM superfamily. Biotin synthase family.</text>
</comment>
<feature type="chain" id="PRO_0000381424" description="Biotin synthase">
    <location>
        <begin position="1"/>
        <end position="326"/>
    </location>
</feature>
<feature type="domain" description="Radical SAM core" evidence="2">
    <location>
        <begin position="48"/>
        <end position="277"/>
    </location>
</feature>
<feature type="binding site" evidence="1">
    <location>
        <position position="66"/>
    </location>
    <ligand>
        <name>[4Fe-4S] cluster</name>
        <dbReference type="ChEBI" id="CHEBI:49883"/>
        <note>4Fe-4S-S-AdoMet</note>
    </ligand>
</feature>
<feature type="binding site" evidence="1">
    <location>
        <position position="70"/>
    </location>
    <ligand>
        <name>[4Fe-4S] cluster</name>
        <dbReference type="ChEBI" id="CHEBI:49883"/>
        <note>4Fe-4S-S-AdoMet</note>
    </ligand>
</feature>
<feature type="binding site" evidence="1">
    <location>
        <position position="73"/>
    </location>
    <ligand>
        <name>[4Fe-4S] cluster</name>
        <dbReference type="ChEBI" id="CHEBI:49883"/>
        <note>4Fe-4S-S-AdoMet</note>
    </ligand>
</feature>
<feature type="binding site" evidence="1">
    <location>
        <position position="110"/>
    </location>
    <ligand>
        <name>[2Fe-2S] cluster</name>
        <dbReference type="ChEBI" id="CHEBI:190135"/>
    </ligand>
</feature>
<feature type="binding site" evidence="1">
    <location>
        <position position="142"/>
    </location>
    <ligand>
        <name>[2Fe-2S] cluster</name>
        <dbReference type="ChEBI" id="CHEBI:190135"/>
    </ligand>
</feature>
<feature type="binding site" evidence="1">
    <location>
        <position position="202"/>
    </location>
    <ligand>
        <name>[2Fe-2S] cluster</name>
        <dbReference type="ChEBI" id="CHEBI:190135"/>
    </ligand>
</feature>
<feature type="binding site" evidence="1">
    <location>
        <position position="272"/>
    </location>
    <ligand>
        <name>[2Fe-2S] cluster</name>
        <dbReference type="ChEBI" id="CHEBI:190135"/>
    </ligand>
</feature>
<dbReference type="EC" id="2.8.1.6" evidence="1"/>
<dbReference type="EMBL" id="CP000930">
    <property type="protein sequence ID" value="ABZ84248.1"/>
    <property type="molecule type" value="Genomic_DNA"/>
</dbReference>
<dbReference type="RefSeq" id="WP_012282753.1">
    <property type="nucleotide sequence ID" value="NC_010337.2"/>
</dbReference>
<dbReference type="SMR" id="B0TE53"/>
<dbReference type="STRING" id="498761.HM1_1678"/>
<dbReference type="KEGG" id="hmo:HM1_1678"/>
<dbReference type="eggNOG" id="COG0502">
    <property type="taxonomic scope" value="Bacteria"/>
</dbReference>
<dbReference type="HOGENOM" id="CLU_033172_2_1_9"/>
<dbReference type="OrthoDB" id="9786826at2"/>
<dbReference type="UniPathway" id="UPA00078">
    <property type="reaction ID" value="UER00162"/>
</dbReference>
<dbReference type="Proteomes" id="UP000008550">
    <property type="component" value="Chromosome"/>
</dbReference>
<dbReference type="GO" id="GO:0051537">
    <property type="term" value="F:2 iron, 2 sulfur cluster binding"/>
    <property type="evidence" value="ECO:0007669"/>
    <property type="project" value="UniProtKB-KW"/>
</dbReference>
<dbReference type="GO" id="GO:0051539">
    <property type="term" value="F:4 iron, 4 sulfur cluster binding"/>
    <property type="evidence" value="ECO:0007669"/>
    <property type="project" value="UniProtKB-KW"/>
</dbReference>
<dbReference type="GO" id="GO:0004076">
    <property type="term" value="F:biotin synthase activity"/>
    <property type="evidence" value="ECO:0007669"/>
    <property type="project" value="UniProtKB-UniRule"/>
</dbReference>
<dbReference type="GO" id="GO:0005506">
    <property type="term" value="F:iron ion binding"/>
    <property type="evidence" value="ECO:0007669"/>
    <property type="project" value="UniProtKB-UniRule"/>
</dbReference>
<dbReference type="GO" id="GO:0009102">
    <property type="term" value="P:biotin biosynthetic process"/>
    <property type="evidence" value="ECO:0007669"/>
    <property type="project" value="UniProtKB-UniRule"/>
</dbReference>
<dbReference type="CDD" id="cd01335">
    <property type="entry name" value="Radical_SAM"/>
    <property type="match status" value="1"/>
</dbReference>
<dbReference type="FunFam" id="3.20.20.70:FF:000026">
    <property type="entry name" value="Biotin synthase"/>
    <property type="match status" value="1"/>
</dbReference>
<dbReference type="Gene3D" id="3.20.20.70">
    <property type="entry name" value="Aldolase class I"/>
    <property type="match status" value="1"/>
</dbReference>
<dbReference type="HAMAP" id="MF_01694">
    <property type="entry name" value="BioB"/>
    <property type="match status" value="1"/>
</dbReference>
<dbReference type="InterPro" id="IPR013785">
    <property type="entry name" value="Aldolase_TIM"/>
</dbReference>
<dbReference type="InterPro" id="IPR010722">
    <property type="entry name" value="BATS_dom"/>
</dbReference>
<dbReference type="InterPro" id="IPR002684">
    <property type="entry name" value="Biotin_synth/BioAB"/>
</dbReference>
<dbReference type="InterPro" id="IPR024177">
    <property type="entry name" value="Biotin_synthase"/>
</dbReference>
<dbReference type="InterPro" id="IPR006638">
    <property type="entry name" value="Elp3/MiaA/NifB-like_rSAM"/>
</dbReference>
<dbReference type="InterPro" id="IPR007197">
    <property type="entry name" value="rSAM"/>
</dbReference>
<dbReference type="NCBIfam" id="TIGR00433">
    <property type="entry name" value="bioB"/>
    <property type="match status" value="1"/>
</dbReference>
<dbReference type="PANTHER" id="PTHR22976">
    <property type="entry name" value="BIOTIN SYNTHASE"/>
    <property type="match status" value="1"/>
</dbReference>
<dbReference type="PANTHER" id="PTHR22976:SF2">
    <property type="entry name" value="BIOTIN SYNTHASE, MITOCHONDRIAL"/>
    <property type="match status" value="1"/>
</dbReference>
<dbReference type="Pfam" id="PF06968">
    <property type="entry name" value="BATS"/>
    <property type="match status" value="1"/>
</dbReference>
<dbReference type="Pfam" id="PF04055">
    <property type="entry name" value="Radical_SAM"/>
    <property type="match status" value="1"/>
</dbReference>
<dbReference type="PIRSF" id="PIRSF001619">
    <property type="entry name" value="Biotin_synth"/>
    <property type="match status" value="1"/>
</dbReference>
<dbReference type="SFLD" id="SFLDG01278">
    <property type="entry name" value="biotin_synthase_like"/>
    <property type="match status" value="1"/>
</dbReference>
<dbReference type="SFLD" id="SFLDS00029">
    <property type="entry name" value="Radical_SAM"/>
    <property type="match status" value="1"/>
</dbReference>
<dbReference type="SMART" id="SM00876">
    <property type="entry name" value="BATS"/>
    <property type="match status" value="1"/>
</dbReference>
<dbReference type="SMART" id="SM00729">
    <property type="entry name" value="Elp3"/>
    <property type="match status" value="1"/>
</dbReference>
<dbReference type="SUPFAM" id="SSF102114">
    <property type="entry name" value="Radical SAM enzymes"/>
    <property type="match status" value="1"/>
</dbReference>
<dbReference type="PROSITE" id="PS51918">
    <property type="entry name" value="RADICAL_SAM"/>
    <property type="match status" value="1"/>
</dbReference>
<accession>B0TE53</accession>
<sequence>MQSIIRQTEAALFAGAVLDRETAGKLARIEGSDIYTLMDVARRVRDHFGAGKVDLCSIVNAKSGACSEDCRFCAQSAHHQACVKTYDLLDPDAIVGRARVMEAEGAHRFSLVTSGRGMSDAELEPVLAIYERLRRETKLSLCASLGILNEAQLRRLAEAGVTMYHHNLEASRRFFPQICTTHSYDERIATIRAAQAAGMVVCSGGIFSMGETIDDRIDMAFELRELGIRSVPINILNPIAGTPLEGQPLIPPLEILKSIALYRLILPSARIRMAGGREGALRDLQSLPFIAGADAALVGSYLTTSGRTVAEDIQMLRDLGLNVNNL</sequence>
<protein>
    <recommendedName>
        <fullName evidence="1">Biotin synthase</fullName>
        <ecNumber evidence="1">2.8.1.6</ecNumber>
    </recommendedName>
</protein>
<name>BIOB_HELMI</name>
<gene>
    <name evidence="1" type="primary">bioB</name>
    <name type="ordered locus">Helmi_16230</name>
    <name type="ORF">HM1_1678</name>
</gene>